<proteinExistence type="inferred from homology"/>
<dbReference type="EC" id="7.1.1.-" evidence="1"/>
<dbReference type="EMBL" id="CP000686">
    <property type="protein sequence ID" value="ABQ92032.1"/>
    <property type="molecule type" value="Genomic_DNA"/>
</dbReference>
<dbReference type="RefSeq" id="WP_011958374.1">
    <property type="nucleotide sequence ID" value="NC_009523.1"/>
</dbReference>
<dbReference type="SMR" id="A5UZH9"/>
<dbReference type="STRING" id="357808.RoseRS_3677"/>
<dbReference type="KEGG" id="rrs:RoseRS_3677"/>
<dbReference type="eggNOG" id="COG0377">
    <property type="taxonomic scope" value="Bacteria"/>
</dbReference>
<dbReference type="HOGENOM" id="CLU_055737_7_3_0"/>
<dbReference type="OrthoDB" id="9786737at2"/>
<dbReference type="Proteomes" id="UP000006554">
    <property type="component" value="Chromosome"/>
</dbReference>
<dbReference type="GO" id="GO:0005886">
    <property type="term" value="C:plasma membrane"/>
    <property type="evidence" value="ECO:0007669"/>
    <property type="project" value="UniProtKB-SubCell"/>
</dbReference>
<dbReference type="GO" id="GO:0045271">
    <property type="term" value="C:respiratory chain complex I"/>
    <property type="evidence" value="ECO:0007669"/>
    <property type="project" value="TreeGrafter"/>
</dbReference>
<dbReference type="GO" id="GO:0051539">
    <property type="term" value="F:4 iron, 4 sulfur cluster binding"/>
    <property type="evidence" value="ECO:0007669"/>
    <property type="project" value="UniProtKB-KW"/>
</dbReference>
<dbReference type="GO" id="GO:0005506">
    <property type="term" value="F:iron ion binding"/>
    <property type="evidence" value="ECO:0007669"/>
    <property type="project" value="UniProtKB-UniRule"/>
</dbReference>
<dbReference type="GO" id="GO:0008137">
    <property type="term" value="F:NADH dehydrogenase (ubiquinone) activity"/>
    <property type="evidence" value="ECO:0007669"/>
    <property type="project" value="InterPro"/>
</dbReference>
<dbReference type="GO" id="GO:0050136">
    <property type="term" value="F:NADH:ubiquinone reductase (non-electrogenic) activity"/>
    <property type="evidence" value="ECO:0007669"/>
    <property type="project" value="UniProtKB-UniRule"/>
</dbReference>
<dbReference type="GO" id="GO:0048038">
    <property type="term" value="F:quinone binding"/>
    <property type="evidence" value="ECO:0007669"/>
    <property type="project" value="UniProtKB-KW"/>
</dbReference>
<dbReference type="GO" id="GO:0009060">
    <property type="term" value="P:aerobic respiration"/>
    <property type="evidence" value="ECO:0007669"/>
    <property type="project" value="TreeGrafter"/>
</dbReference>
<dbReference type="GO" id="GO:0015990">
    <property type="term" value="P:electron transport coupled proton transport"/>
    <property type="evidence" value="ECO:0007669"/>
    <property type="project" value="TreeGrafter"/>
</dbReference>
<dbReference type="FunFam" id="3.40.50.12280:FF:000004">
    <property type="entry name" value="NADH-quinone oxidoreductase subunit B"/>
    <property type="match status" value="1"/>
</dbReference>
<dbReference type="Gene3D" id="3.40.50.12280">
    <property type="match status" value="1"/>
</dbReference>
<dbReference type="HAMAP" id="MF_01356">
    <property type="entry name" value="NDH1_NuoB"/>
    <property type="match status" value="1"/>
</dbReference>
<dbReference type="InterPro" id="IPR006137">
    <property type="entry name" value="NADH_UbQ_OxRdtase-like_20kDa"/>
</dbReference>
<dbReference type="InterPro" id="IPR006138">
    <property type="entry name" value="NADH_UQ_OxRdtase_20Kd_su"/>
</dbReference>
<dbReference type="NCBIfam" id="TIGR01957">
    <property type="entry name" value="nuoB_fam"/>
    <property type="match status" value="1"/>
</dbReference>
<dbReference type="NCBIfam" id="NF005012">
    <property type="entry name" value="PRK06411.1"/>
    <property type="match status" value="1"/>
</dbReference>
<dbReference type="PANTHER" id="PTHR11995">
    <property type="entry name" value="NADH DEHYDROGENASE"/>
    <property type="match status" value="1"/>
</dbReference>
<dbReference type="PANTHER" id="PTHR11995:SF14">
    <property type="entry name" value="NADH DEHYDROGENASE [UBIQUINONE] IRON-SULFUR PROTEIN 7, MITOCHONDRIAL"/>
    <property type="match status" value="1"/>
</dbReference>
<dbReference type="Pfam" id="PF01058">
    <property type="entry name" value="Oxidored_q6"/>
    <property type="match status" value="1"/>
</dbReference>
<dbReference type="SUPFAM" id="SSF56770">
    <property type="entry name" value="HydA/Nqo6-like"/>
    <property type="match status" value="1"/>
</dbReference>
<accession>A5UZH9</accession>
<reference key="1">
    <citation type="submission" date="2007-04" db="EMBL/GenBank/DDBJ databases">
        <title>Complete sequence of Roseiflexus sp. RS-1.</title>
        <authorList>
            <consortium name="US DOE Joint Genome Institute"/>
            <person name="Copeland A."/>
            <person name="Lucas S."/>
            <person name="Lapidus A."/>
            <person name="Barry K."/>
            <person name="Detter J.C."/>
            <person name="Glavina del Rio T."/>
            <person name="Hammon N."/>
            <person name="Israni S."/>
            <person name="Dalin E."/>
            <person name="Tice H."/>
            <person name="Pitluck S."/>
            <person name="Chertkov O."/>
            <person name="Brettin T."/>
            <person name="Bruce D."/>
            <person name="Han C."/>
            <person name="Schmutz J."/>
            <person name="Larimer F."/>
            <person name="Land M."/>
            <person name="Hauser L."/>
            <person name="Kyrpides N."/>
            <person name="Mikhailova N."/>
            <person name="Bryant D.A."/>
            <person name="Richardson P."/>
        </authorList>
    </citation>
    <scope>NUCLEOTIDE SEQUENCE [LARGE SCALE GENOMIC DNA]</scope>
    <source>
        <strain>RS-1</strain>
    </source>
</reference>
<evidence type="ECO:0000255" key="1">
    <source>
        <dbReference type="HAMAP-Rule" id="MF_01356"/>
    </source>
</evidence>
<feature type="chain" id="PRO_0000376351" description="NADH-quinone oxidoreductase subunit B 2">
    <location>
        <begin position="1"/>
        <end position="167"/>
    </location>
</feature>
<feature type="binding site" evidence="1">
    <location>
        <position position="38"/>
    </location>
    <ligand>
        <name>[4Fe-4S] cluster</name>
        <dbReference type="ChEBI" id="CHEBI:49883"/>
    </ligand>
</feature>
<feature type="binding site" evidence="1">
    <location>
        <position position="39"/>
    </location>
    <ligand>
        <name>[4Fe-4S] cluster</name>
        <dbReference type="ChEBI" id="CHEBI:49883"/>
    </ligand>
</feature>
<feature type="binding site" evidence="1">
    <location>
        <position position="104"/>
    </location>
    <ligand>
        <name>[4Fe-4S] cluster</name>
        <dbReference type="ChEBI" id="CHEBI:49883"/>
    </ligand>
</feature>
<feature type="binding site" evidence="1">
    <location>
        <position position="133"/>
    </location>
    <ligand>
        <name>[4Fe-4S] cluster</name>
        <dbReference type="ChEBI" id="CHEBI:49883"/>
    </ligand>
</feature>
<comment type="function">
    <text evidence="1">NDH-1 shuttles electrons from NADH, via FMN and iron-sulfur (Fe-S) centers, to quinones in the respiratory chain. The immediate electron acceptor for the enzyme in this species is believed to be ubiquinone. Couples the redox reaction to proton translocation (for every two electrons transferred, four hydrogen ions are translocated across the cytoplasmic membrane), and thus conserves the redox energy in a proton gradient.</text>
</comment>
<comment type="catalytic activity">
    <reaction evidence="1">
        <text>a quinone + NADH + 5 H(+)(in) = a quinol + NAD(+) + 4 H(+)(out)</text>
        <dbReference type="Rhea" id="RHEA:57888"/>
        <dbReference type="ChEBI" id="CHEBI:15378"/>
        <dbReference type="ChEBI" id="CHEBI:24646"/>
        <dbReference type="ChEBI" id="CHEBI:57540"/>
        <dbReference type="ChEBI" id="CHEBI:57945"/>
        <dbReference type="ChEBI" id="CHEBI:132124"/>
    </reaction>
</comment>
<comment type="cofactor">
    <cofactor evidence="1">
        <name>[4Fe-4S] cluster</name>
        <dbReference type="ChEBI" id="CHEBI:49883"/>
    </cofactor>
    <text evidence="1">Binds 1 [4Fe-4S] cluster.</text>
</comment>
<comment type="subunit">
    <text evidence="1">NDH-1 is composed of 14 different subunits. Subunits NuoB, C, D, E, F, and G constitute the peripheral sector of the complex.</text>
</comment>
<comment type="subcellular location">
    <subcellularLocation>
        <location evidence="1">Cell membrane</location>
        <topology evidence="1">Peripheral membrane protein</topology>
        <orientation evidence="1">Cytoplasmic side</orientation>
    </subcellularLocation>
</comment>
<comment type="similarity">
    <text evidence="1">Belongs to the complex I 20 kDa subunit family.</text>
</comment>
<gene>
    <name evidence="1" type="primary">nuoB2</name>
    <name type="ordered locus">RoseRS_3677</name>
</gene>
<organism>
    <name type="scientific">Roseiflexus sp. (strain RS-1)</name>
    <dbReference type="NCBI Taxonomy" id="357808"/>
    <lineage>
        <taxon>Bacteria</taxon>
        <taxon>Bacillati</taxon>
        <taxon>Chloroflexota</taxon>
        <taxon>Chloroflexia</taxon>
        <taxon>Chloroflexales</taxon>
        <taxon>Roseiflexineae</taxon>
        <taxon>Roseiflexaceae</taxon>
        <taxon>Roseiflexus</taxon>
    </lineage>
</organism>
<name>NUOB2_ROSS1</name>
<sequence length="167" mass="18336">MGIEQKAGDMGIVTASLEQLVNWSRSSAMWPLLFGLACCAIEMMGAQGANYDLSRFGMEINRASPRQADLMIVAGRVSRKMAPVVRRLYDQMADPKWVIAMGDCAACGGVFNNYAIVQGVDEIVPVDVYVAGCPPRPEALIDGIIHLHEKVKRMRLDGELREPVRLS</sequence>
<keyword id="KW-0004">4Fe-4S</keyword>
<keyword id="KW-1003">Cell membrane</keyword>
<keyword id="KW-0408">Iron</keyword>
<keyword id="KW-0411">Iron-sulfur</keyword>
<keyword id="KW-0472">Membrane</keyword>
<keyword id="KW-0479">Metal-binding</keyword>
<keyword id="KW-0520">NAD</keyword>
<keyword id="KW-0874">Quinone</keyword>
<keyword id="KW-1278">Translocase</keyword>
<keyword id="KW-0813">Transport</keyword>
<keyword id="KW-0830">Ubiquinone</keyword>
<protein>
    <recommendedName>
        <fullName evidence="1">NADH-quinone oxidoreductase subunit B 2</fullName>
        <ecNumber evidence="1">7.1.1.-</ecNumber>
    </recommendedName>
    <alternativeName>
        <fullName evidence="1">NADH dehydrogenase I subunit B 2</fullName>
    </alternativeName>
    <alternativeName>
        <fullName evidence="1">NDH-1 subunit B 2</fullName>
    </alternativeName>
</protein>